<feature type="chain" id="PRO_0000372016" description="Zinc finger CCCH domain-containing protein 66">
    <location>
        <begin position="1"/>
        <end position="607"/>
    </location>
</feature>
<feature type="repeat" description="ANK 1">
    <location>
        <begin position="57"/>
        <end position="87"/>
    </location>
</feature>
<feature type="repeat" description="ANK 2">
    <location>
        <begin position="92"/>
        <end position="124"/>
    </location>
</feature>
<feature type="zinc finger region" description="C3H1-type 1" evidence="1">
    <location>
        <begin position="254"/>
        <end position="276"/>
    </location>
</feature>
<feature type="zinc finger region" description="C3H1-type 2" evidence="1">
    <location>
        <begin position="284"/>
        <end position="308"/>
    </location>
</feature>
<feature type="region of interest" description="Disordered" evidence="2">
    <location>
        <begin position="161"/>
        <end position="193"/>
    </location>
</feature>
<feature type="region of interest" description="Disordered" evidence="2">
    <location>
        <begin position="342"/>
        <end position="363"/>
    </location>
</feature>
<feature type="compositionally biased region" description="Acidic residues" evidence="2">
    <location>
        <begin position="161"/>
        <end position="178"/>
    </location>
</feature>
<feature type="compositionally biased region" description="Polar residues" evidence="2">
    <location>
        <begin position="349"/>
        <end position="361"/>
    </location>
</feature>
<evidence type="ECO:0000255" key="1">
    <source>
        <dbReference type="PROSITE-ProRule" id="PRU00723"/>
    </source>
</evidence>
<evidence type="ECO:0000256" key="2">
    <source>
        <dbReference type="SAM" id="MobiDB-lite"/>
    </source>
</evidence>
<name>C3H66_ARATH</name>
<sequence>MGVDELSHLKFSLLLESSACNDLSGFKSLVEEEGLESIDGSGLWYGRRLGSKKMGFEERTPLMIAALFGSKEVVDYIISTGLVDVNRSCGSDGATALHCAVSGLSANSLEIVTLLLKGSANPDSCDAYGNKPGDVIFPCLSPVFSARMKVLERLLKGNDDLNEVNGQEESEPEVEVEVEVSPPRGSERKEYPVDPTLPDIKNGVYGTDEFRMYAFKIKPCSRAYSHDWTECPFVHPGENARRRDPRKYHYSCVPCPEFRKGSCSRGDTCEYAHGIFECWLHPAQYRTRLCKDETNCSRRVCFFAHKPEELRPLYPSTGSGVPSPRSSFSSCNSSTAFDMGPISPLPIGATTTPPLSPNGVSSPIGGGKTWMNWPNITPPALQLPGSRLKSALNAREIDFSEEMQSLTSPTTWNNTPMSSPFSGKGMNRLAGGAMSPVNSLSDMFGTEDNTSGLQIRRSVINPQLHSNSLSSSPVGANSLFSMDSSAVLASRAAEFAKQRSQSFIERNNGLNHHPAISSMTTTCLNDWGSLDGKLDWSVQGDELQKLRKSTSFRLRAGGMESRLPNEGTGLEEPDVSWVEPLVKEPQETRLAPVWMEQSYMETEQTVA</sequence>
<organism>
    <name type="scientific">Arabidopsis thaliana</name>
    <name type="common">Mouse-ear cress</name>
    <dbReference type="NCBI Taxonomy" id="3702"/>
    <lineage>
        <taxon>Eukaryota</taxon>
        <taxon>Viridiplantae</taxon>
        <taxon>Streptophyta</taxon>
        <taxon>Embryophyta</taxon>
        <taxon>Tracheophyta</taxon>
        <taxon>Spermatophyta</taxon>
        <taxon>Magnoliopsida</taxon>
        <taxon>eudicotyledons</taxon>
        <taxon>Gunneridae</taxon>
        <taxon>Pentapetalae</taxon>
        <taxon>rosids</taxon>
        <taxon>malvids</taxon>
        <taxon>Brassicales</taxon>
        <taxon>Brassicaceae</taxon>
        <taxon>Camelineae</taxon>
        <taxon>Arabidopsis</taxon>
    </lineage>
</organism>
<protein>
    <recommendedName>
        <fullName>Zinc finger CCCH domain-containing protein 66</fullName>
        <shortName>AtC3H66</shortName>
    </recommendedName>
</protein>
<keyword id="KW-0040">ANK repeat</keyword>
<keyword id="KW-0238">DNA-binding</keyword>
<keyword id="KW-0479">Metal-binding</keyword>
<keyword id="KW-1185">Reference proteome</keyword>
<keyword id="KW-0677">Repeat</keyword>
<keyword id="KW-0862">Zinc</keyword>
<keyword id="KW-0863">Zinc-finger</keyword>
<gene>
    <name type="ordered locus">At5g58620</name>
    <name type="ORF">MZN1.16</name>
    <name type="ORF">MZN1.8</name>
</gene>
<dbReference type="EMBL" id="AB020755">
    <property type="protein sequence ID" value="BAA97332.1"/>
    <property type="molecule type" value="Genomic_DNA"/>
</dbReference>
<dbReference type="EMBL" id="CP002688">
    <property type="protein sequence ID" value="AED97077.1"/>
    <property type="molecule type" value="Genomic_DNA"/>
</dbReference>
<dbReference type="EMBL" id="AY054176">
    <property type="protein sequence ID" value="AAL06837.1"/>
    <property type="molecule type" value="mRNA"/>
</dbReference>
<dbReference type="EMBL" id="AY062491">
    <property type="protein sequence ID" value="AAL32569.1"/>
    <property type="molecule type" value="mRNA"/>
</dbReference>
<dbReference type="EMBL" id="AY103314">
    <property type="protein sequence ID" value="AAM65365.1"/>
    <property type="molecule type" value="mRNA"/>
</dbReference>
<dbReference type="EMBL" id="BT002083">
    <property type="protein sequence ID" value="AAN72094.1"/>
    <property type="molecule type" value="mRNA"/>
</dbReference>
<dbReference type="RefSeq" id="NP_200670.1">
    <property type="nucleotide sequence ID" value="NM_125249.3"/>
</dbReference>
<dbReference type="SMR" id="Q9LUZ4"/>
<dbReference type="BioGRID" id="21220">
    <property type="interactions" value="20"/>
</dbReference>
<dbReference type="FunCoup" id="Q9LUZ4">
    <property type="interactions" value="488"/>
</dbReference>
<dbReference type="IntAct" id="Q9LUZ4">
    <property type="interactions" value="20"/>
</dbReference>
<dbReference type="STRING" id="3702.Q9LUZ4"/>
<dbReference type="iPTMnet" id="Q9LUZ4"/>
<dbReference type="PaxDb" id="3702-AT5G58620.1"/>
<dbReference type="ProteomicsDB" id="239197"/>
<dbReference type="EnsemblPlants" id="AT5G58620.1">
    <property type="protein sequence ID" value="AT5G58620.1"/>
    <property type="gene ID" value="AT5G58620"/>
</dbReference>
<dbReference type="GeneID" id="835976"/>
<dbReference type="Gramene" id="AT5G58620.1">
    <property type="protein sequence ID" value="AT5G58620.1"/>
    <property type="gene ID" value="AT5G58620"/>
</dbReference>
<dbReference type="KEGG" id="ath:AT5G58620"/>
<dbReference type="Araport" id="AT5G58620"/>
<dbReference type="TAIR" id="AT5G58620">
    <property type="gene designation" value="TZF9"/>
</dbReference>
<dbReference type="eggNOG" id="KOG1595">
    <property type="taxonomic scope" value="Eukaryota"/>
</dbReference>
<dbReference type="HOGENOM" id="CLU_015068_1_0_1"/>
<dbReference type="InParanoid" id="Q9LUZ4"/>
<dbReference type="OMA" id="TTCLNDW"/>
<dbReference type="PhylomeDB" id="Q9LUZ4"/>
<dbReference type="PRO" id="PR:Q9LUZ4"/>
<dbReference type="Proteomes" id="UP000006548">
    <property type="component" value="Chromosome 5"/>
</dbReference>
<dbReference type="ExpressionAtlas" id="Q9LUZ4">
    <property type="expression patterns" value="baseline and differential"/>
</dbReference>
<dbReference type="GO" id="GO:0010494">
    <property type="term" value="C:cytoplasmic stress granule"/>
    <property type="evidence" value="ECO:0000314"/>
    <property type="project" value="TAIR"/>
</dbReference>
<dbReference type="GO" id="GO:0000932">
    <property type="term" value="C:P-body"/>
    <property type="evidence" value="ECO:0000314"/>
    <property type="project" value="TAIR"/>
</dbReference>
<dbReference type="GO" id="GO:0003677">
    <property type="term" value="F:DNA binding"/>
    <property type="evidence" value="ECO:0007669"/>
    <property type="project" value="UniProtKB-KW"/>
</dbReference>
<dbReference type="GO" id="GO:0003700">
    <property type="term" value="F:DNA-binding transcription factor activity"/>
    <property type="evidence" value="ECO:0000250"/>
    <property type="project" value="TAIR"/>
</dbReference>
<dbReference type="GO" id="GO:0003723">
    <property type="term" value="F:RNA binding"/>
    <property type="evidence" value="ECO:0000314"/>
    <property type="project" value="TAIR"/>
</dbReference>
<dbReference type="GO" id="GO:0008270">
    <property type="term" value="F:zinc ion binding"/>
    <property type="evidence" value="ECO:0007669"/>
    <property type="project" value="UniProtKB-KW"/>
</dbReference>
<dbReference type="GO" id="GO:0006355">
    <property type="term" value="P:regulation of DNA-templated transcription"/>
    <property type="evidence" value="ECO:0000304"/>
    <property type="project" value="TAIR"/>
</dbReference>
<dbReference type="GO" id="GO:0006412">
    <property type="term" value="P:translation"/>
    <property type="evidence" value="ECO:0000315"/>
    <property type="project" value="TAIR"/>
</dbReference>
<dbReference type="FunFam" id="3.30.1370.210:FF:000009">
    <property type="entry name" value="Zinc finger CCCH domain-containing protein 66"/>
    <property type="match status" value="1"/>
</dbReference>
<dbReference type="Gene3D" id="3.30.1370.210">
    <property type="match status" value="1"/>
</dbReference>
<dbReference type="Gene3D" id="1.25.40.20">
    <property type="entry name" value="Ankyrin repeat-containing domain"/>
    <property type="match status" value="1"/>
</dbReference>
<dbReference type="InterPro" id="IPR002110">
    <property type="entry name" value="Ankyrin_rpt"/>
</dbReference>
<dbReference type="InterPro" id="IPR036770">
    <property type="entry name" value="Ankyrin_rpt-contain_sf"/>
</dbReference>
<dbReference type="InterPro" id="IPR045234">
    <property type="entry name" value="Unkempt-like"/>
</dbReference>
<dbReference type="InterPro" id="IPR041367">
    <property type="entry name" value="Znf-CCCH_4"/>
</dbReference>
<dbReference type="InterPro" id="IPR000571">
    <property type="entry name" value="Znf_CCCH"/>
</dbReference>
<dbReference type="PANTHER" id="PTHR14493">
    <property type="entry name" value="UNKEMPT FAMILY MEMBER"/>
    <property type="match status" value="1"/>
</dbReference>
<dbReference type="PANTHER" id="PTHR14493:SF87">
    <property type="entry name" value="ZINC FINGER CCCH DOMAIN-CONTAINING PROTEIN 66"/>
    <property type="match status" value="1"/>
</dbReference>
<dbReference type="Pfam" id="PF12796">
    <property type="entry name" value="Ank_2"/>
    <property type="match status" value="1"/>
</dbReference>
<dbReference type="Pfam" id="PF18044">
    <property type="entry name" value="zf-CCCH_4"/>
    <property type="match status" value="1"/>
</dbReference>
<dbReference type="Pfam" id="PF25512">
    <property type="entry name" value="zf-CCCH_AtC3H23"/>
    <property type="match status" value="1"/>
</dbReference>
<dbReference type="SMART" id="SM00248">
    <property type="entry name" value="ANK"/>
    <property type="match status" value="2"/>
</dbReference>
<dbReference type="SMART" id="SM00356">
    <property type="entry name" value="ZnF_C3H1"/>
    <property type="match status" value="2"/>
</dbReference>
<dbReference type="SUPFAM" id="SSF48403">
    <property type="entry name" value="Ankyrin repeat"/>
    <property type="match status" value="1"/>
</dbReference>
<dbReference type="PROSITE" id="PS50297">
    <property type="entry name" value="ANK_REP_REGION"/>
    <property type="match status" value="1"/>
</dbReference>
<dbReference type="PROSITE" id="PS50088">
    <property type="entry name" value="ANK_REPEAT"/>
    <property type="match status" value="1"/>
</dbReference>
<dbReference type="PROSITE" id="PS50103">
    <property type="entry name" value="ZF_C3H1"/>
    <property type="match status" value="2"/>
</dbReference>
<reference key="1">
    <citation type="journal article" date="2000" name="DNA Res.">
        <title>Structural analysis of Arabidopsis thaliana chromosome 5. X. Sequence features of the regions of 3,076,755 bp covered by sixty P1 and TAC clones.</title>
        <authorList>
            <person name="Sato S."/>
            <person name="Nakamura Y."/>
            <person name="Kaneko T."/>
            <person name="Katoh T."/>
            <person name="Asamizu E."/>
            <person name="Kotani H."/>
            <person name="Tabata S."/>
        </authorList>
    </citation>
    <scope>NUCLEOTIDE SEQUENCE [LARGE SCALE GENOMIC DNA]</scope>
    <source>
        <strain>cv. Columbia</strain>
    </source>
</reference>
<reference key="2">
    <citation type="journal article" date="2017" name="Plant J.">
        <title>Araport11: a complete reannotation of the Arabidopsis thaliana reference genome.</title>
        <authorList>
            <person name="Cheng C.Y."/>
            <person name="Krishnakumar V."/>
            <person name="Chan A.P."/>
            <person name="Thibaud-Nissen F."/>
            <person name="Schobel S."/>
            <person name="Town C.D."/>
        </authorList>
    </citation>
    <scope>GENOME REANNOTATION</scope>
    <source>
        <strain>cv. Columbia</strain>
    </source>
</reference>
<reference key="3">
    <citation type="journal article" date="2003" name="Science">
        <title>Empirical analysis of transcriptional activity in the Arabidopsis genome.</title>
        <authorList>
            <person name="Yamada K."/>
            <person name="Lim J."/>
            <person name="Dale J.M."/>
            <person name="Chen H."/>
            <person name="Shinn P."/>
            <person name="Palm C.J."/>
            <person name="Southwick A.M."/>
            <person name="Wu H.C."/>
            <person name="Kim C.J."/>
            <person name="Nguyen M."/>
            <person name="Pham P.K."/>
            <person name="Cheuk R.F."/>
            <person name="Karlin-Newmann G."/>
            <person name="Liu S.X."/>
            <person name="Lam B."/>
            <person name="Sakano H."/>
            <person name="Wu T."/>
            <person name="Yu G."/>
            <person name="Miranda M."/>
            <person name="Quach H.L."/>
            <person name="Tripp M."/>
            <person name="Chang C.H."/>
            <person name="Lee J.M."/>
            <person name="Toriumi M.J."/>
            <person name="Chan M.M."/>
            <person name="Tang C.C."/>
            <person name="Onodera C.S."/>
            <person name="Deng J.M."/>
            <person name="Akiyama K."/>
            <person name="Ansari Y."/>
            <person name="Arakawa T."/>
            <person name="Banh J."/>
            <person name="Banno F."/>
            <person name="Bowser L."/>
            <person name="Brooks S.Y."/>
            <person name="Carninci P."/>
            <person name="Chao Q."/>
            <person name="Choy N."/>
            <person name="Enju A."/>
            <person name="Goldsmith A.D."/>
            <person name="Gurjal M."/>
            <person name="Hansen N.F."/>
            <person name="Hayashizaki Y."/>
            <person name="Johnson-Hopson C."/>
            <person name="Hsuan V.W."/>
            <person name="Iida K."/>
            <person name="Karnes M."/>
            <person name="Khan S."/>
            <person name="Koesema E."/>
            <person name="Ishida J."/>
            <person name="Jiang P.X."/>
            <person name="Jones T."/>
            <person name="Kawai J."/>
            <person name="Kamiya A."/>
            <person name="Meyers C."/>
            <person name="Nakajima M."/>
            <person name="Narusaka M."/>
            <person name="Seki M."/>
            <person name="Sakurai T."/>
            <person name="Satou M."/>
            <person name="Tamse R."/>
            <person name="Vaysberg M."/>
            <person name="Wallender E.K."/>
            <person name="Wong C."/>
            <person name="Yamamura Y."/>
            <person name="Yuan S."/>
            <person name="Shinozaki K."/>
            <person name="Davis R.W."/>
            <person name="Theologis A."/>
            <person name="Ecker J.R."/>
        </authorList>
    </citation>
    <scope>NUCLEOTIDE SEQUENCE [LARGE SCALE MRNA]</scope>
    <source>
        <strain>cv. Columbia</strain>
    </source>
</reference>
<reference key="4">
    <citation type="journal article" date="2008" name="BMC Genomics">
        <title>Genome-wide analysis of CCCH zinc finger family in Arabidopsis and rice.</title>
        <authorList>
            <person name="Wang D."/>
            <person name="Guo Y."/>
            <person name="Wu C."/>
            <person name="Yang G."/>
            <person name="Li Y."/>
            <person name="Zheng C."/>
        </authorList>
    </citation>
    <scope>NOMENCLATURE</scope>
</reference>
<proteinExistence type="evidence at transcript level"/>
<accession>Q9LUZ4</accession>